<gene>
    <name evidence="2" type="primary">SLC19A1</name>
</gene>
<dbReference type="EMBL" id="U03031">
    <property type="protein sequence ID" value="AAC52138.1"/>
    <property type="molecule type" value="mRNA"/>
</dbReference>
<dbReference type="EMBL" id="JH000220">
    <property type="protein sequence ID" value="EGV98038.1"/>
    <property type="molecule type" value="Genomic_DNA"/>
</dbReference>
<dbReference type="PIR" id="A53207">
    <property type="entry name" value="A53207"/>
</dbReference>
<dbReference type="RefSeq" id="NP_001233760.1">
    <property type="nucleotide sequence ID" value="NM_001246831.1"/>
</dbReference>
<dbReference type="RefSeq" id="XP_007639501.1">
    <property type="nucleotide sequence ID" value="XM_007641311.2"/>
</dbReference>
<dbReference type="RefSeq" id="XP_007639502.1">
    <property type="nucleotide sequence ID" value="XM_007641312.2"/>
</dbReference>
<dbReference type="RefSeq" id="XP_007639503.1">
    <property type="nucleotide sequence ID" value="XM_007641313.2"/>
</dbReference>
<dbReference type="RefSeq" id="XP_007639504.1">
    <property type="nucleotide sequence ID" value="XM_007641314.2"/>
</dbReference>
<dbReference type="RefSeq" id="XP_007639506.1">
    <property type="nucleotide sequence ID" value="XM_007641316.2"/>
</dbReference>
<dbReference type="SMR" id="P42557"/>
<dbReference type="FunCoup" id="P42557">
    <property type="interactions" value="98"/>
</dbReference>
<dbReference type="STRING" id="10029.P42557"/>
<dbReference type="GlyCosmos" id="P42557">
    <property type="glycosylation" value="1 site, No reported glycans"/>
</dbReference>
<dbReference type="PaxDb" id="10029-NP_001233760.1"/>
<dbReference type="Ensembl" id="ENSCGRT00001020802.1">
    <property type="protein sequence ID" value="ENSCGRP00001016558.1"/>
    <property type="gene ID" value="ENSCGRG00001016846.1"/>
</dbReference>
<dbReference type="GeneID" id="100689407"/>
<dbReference type="KEGG" id="cge:100689407"/>
<dbReference type="CTD" id="6573"/>
<dbReference type="eggNOG" id="KOG3810">
    <property type="taxonomic scope" value="Eukaryota"/>
</dbReference>
<dbReference type="GeneTree" id="ENSGT00950000183022"/>
<dbReference type="InParanoid" id="P42557"/>
<dbReference type="OMA" id="MQFMELF"/>
<dbReference type="OrthoDB" id="18814at2759"/>
<dbReference type="Proteomes" id="UP000001075">
    <property type="component" value="Unassembled WGS sequence"/>
</dbReference>
<dbReference type="Proteomes" id="UP000694386">
    <property type="component" value="Unplaced"/>
</dbReference>
<dbReference type="Proteomes" id="UP001108280">
    <property type="component" value="Chromosome 1"/>
</dbReference>
<dbReference type="GO" id="GO:0016324">
    <property type="term" value="C:apical plasma membrane"/>
    <property type="evidence" value="ECO:0007669"/>
    <property type="project" value="UniProtKB-SubCell"/>
</dbReference>
<dbReference type="GO" id="GO:0016323">
    <property type="term" value="C:basolateral plasma membrane"/>
    <property type="evidence" value="ECO:0007669"/>
    <property type="project" value="UniProtKB-SubCell"/>
</dbReference>
<dbReference type="GO" id="GO:0061507">
    <property type="term" value="F:2',3'-cyclic GMP-AMP binding"/>
    <property type="evidence" value="ECO:0007669"/>
    <property type="project" value="Ensembl"/>
</dbReference>
<dbReference type="GO" id="GO:0015297">
    <property type="term" value="F:antiporter activity"/>
    <property type="evidence" value="ECO:0000250"/>
    <property type="project" value="UniProtKB"/>
</dbReference>
<dbReference type="GO" id="GO:0140360">
    <property type="term" value="F:cyclic-GMP-AMP transmembrane transporter activity"/>
    <property type="evidence" value="ECO:0007669"/>
    <property type="project" value="Ensembl"/>
</dbReference>
<dbReference type="GO" id="GO:0008518">
    <property type="term" value="F:folate:monoatomic anion antiporter activity"/>
    <property type="evidence" value="ECO:0000250"/>
    <property type="project" value="UniProtKB"/>
</dbReference>
<dbReference type="GO" id="GO:0005542">
    <property type="term" value="F:folic acid binding"/>
    <property type="evidence" value="ECO:0007669"/>
    <property type="project" value="UniProtKB-KW"/>
</dbReference>
<dbReference type="GO" id="GO:0015350">
    <property type="term" value="F:methotrexate transmembrane transporter activity"/>
    <property type="evidence" value="ECO:0007669"/>
    <property type="project" value="Ensembl"/>
</dbReference>
<dbReference type="GO" id="GO:0140361">
    <property type="term" value="P:cyclic-GMP-AMP transmembrane import across plasma membrane"/>
    <property type="evidence" value="ECO:0007669"/>
    <property type="project" value="Ensembl"/>
</dbReference>
<dbReference type="GO" id="GO:1904447">
    <property type="term" value="P:folate import across plasma membrane"/>
    <property type="evidence" value="ECO:0007669"/>
    <property type="project" value="Ensembl"/>
</dbReference>
<dbReference type="GO" id="GO:0141111">
    <property type="term" value="P:positive regulation of cGAS/STING signaling pathway"/>
    <property type="evidence" value="ECO:0007669"/>
    <property type="project" value="Ensembl"/>
</dbReference>
<dbReference type="FunFam" id="1.20.1250.20:FF:000225">
    <property type="entry name" value="Solute carrier family 19 member 1"/>
    <property type="match status" value="1"/>
</dbReference>
<dbReference type="Gene3D" id="1.20.1250.20">
    <property type="entry name" value="MFS general substrate transporter like domains"/>
    <property type="match status" value="1"/>
</dbReference>
<dbReference type="InterPro" id="IPR002666">
    <property type="entry name" value="Folate_carrier"/>
</dbReference>
<dbReference type="InterPro" id="IPR036259">
    <property type="entry name" value="MFS_trans_sf"/>
</dbReference>
<dbReference type="InterPro" id="IPR028339">
    <property type="entry name" value="SLC19A1"/>
</dbReference>
<dbReference type="NCBIfam" id="TIGR00806">
    <property type="entry name" value="rfc"/>
    <property type="match status" value="1"/>
</dbReference>
<dbReference type="PANTHER" id="PTHR10686">
    <property type="entry name" value="FOLATE TRANSPORTER"/>
    <property type="match status" value="1"/>
</dbReference>
<dbReference type="PANTHER" id="PTHR10686:SF12">
    <property type="entry name" value="REDUCED FOLATE TRANSPORTER"/>
    <property type="match status" value="1"/>
</dbReference>
<dbReference type="Pfam" id="PF01770">
    <property type="entry name" value="Folate_carrier"/>
    <property type="match status" value="1"/>
</dbReference>
<dbReference type="PIRSF" id="PIRSF028739">
    <property type="entry name" value="Folate_carrier"/>
    <property type="match status" value="1"/>
</dbReference>
<dbReference type="PIRSF" id="PIRSF500793">
    <property type="entry name" value="Folate_transporter_1"/>
    <property type="match status" value="1"/>
</dbReference>
<dbReference type="SUPFAM" id="SSF103473">
    <property type="entry name" value="MFS general substrate transporter"/>
    <property type="match status" value="1"/>
</dbReference>
<comment type="function">
    <text evidence="1 2">Antiporter that mediates the import of reduced folates, driven by the export of organic anions (By similarity). Also acts as an importer of immunoreactive cyclic dinucleotides, but with a lower transporter activity (By similarity). Mechanistically, acts as a secondary active transporter, which exports intracellular organic anions down their concentration gradients to facilitate the uptake of its substrates (By similarity). Has high affinity for N5-methyltetrahydrofolate, the predominant circulating form of folate. Also mediates the import of antifolate drug methotrexate (By similarity). 5-amino-4-imidazolecarboxamide riboside (AICAR), when phosphorylated to AICAR monophosphate, can serve as an organic anion for antiporter activity (By similarity).</text>
</comment>
<comment type="catalytic activity">
    <reaction evidence="2">
        <text>5-amino-1-(5-phospho-beta-D-ribosyl)imidazole-4-carboxamide(in) + (6S)-5-methyl-5,6,7,8-tetrahydrofolate(out) = 5-amino-1-(5-phospho-beta-D-ribosyl)imidazole-4-carboxamide(out) + (6S)-5-methyl-5,6,7,8-tetrahydrofolate(in)</text>
        <dbReference type="Rhea" id="RHEA:60460"/>
        <dbReference type="ChEBI" id="CHEBI:18608"/>
        <dbReference type="ChEBI" id="CHEBI:58475"/>
    </reaction>
    <physiologicalReaction direction="left-to-right" evidence="2">
        <dbReference type="Rhea" id="RHEA:60461"/>
    </physiologicalReaction>
</comment>
<comment type="subcellular location">
    <subcellularLocation>
        <location evidence="2">Cell membrane</location>
        <topology evidence="2">Multi-pass membrane protein</topology>
    </subcellularLocation>
    <subcellularLocation>
        <location evidence="2">Apical cell membrane</location>
        <topology evidence="2">Multi-pass membrane protein</topology>
    </subcellularLocation>
    <subcellularLocation>
        <location evidence="2">Basolateral cell membrane</location>
        <topology evidence="2">Multi-pass membrane protein</topology>
    </subcellularLocation>
</comment>
<comment type="similarity">
    <text evidence="6">Belongs to the reduced folate carrier (RFC) transporter (TC 2.A.48) family.</text>
</comment>
<protein>
    <recommendedName>
        <fullName evidence="6">Reduced folate transporter</fullName>
    </recommendedName>
    <alternativeName>
        <fullName evidence="5">Methotrexate uptake protein</fullName>
    </alternativeName>
    <alternativeName>
        <fullName evidence="6">Plasma membrane folate antiporter SLC19A1</fullName>
    </alternativeName>
    <alternativeName>
        <fullName evidence="2">Reduced folate carrier 1</fullName>
        <shortName evidence="2">RFC-1</shortName>
        <shortName evidence="2">RFC1</shortName>
    </alternativeName>
    <alternativeName>
        <fullName evidence="2">Solute carrier family 19 member 1</fullName>
    </alternativeName>
</protein>
<name>S19A1_CRIGR</name>
<proteinExistence type="evidence at transcript level"/>
<organism>
    <name type="scientific">Cricetulus griseus</name>
    <name type="common">Chinese hamster</name>
    <name type="synonym">Cricetulus barabensis griseus</name>
    <dbReference type="NCBI Taxonomy" id="10029"/>
    <lineage>
        <taxon>Eukaryota</taxon>
        <taxon>Metazoa</taxon>
        <taxon>Chordata</taxon>
        <taxon>Craniata</taxon>
        <taxon>Vertebrata</taxon>
        <taxon>Euteleostomi</taxon>
        <taxon>Mammalia</taxon>
        <taxon>Eutheria</taxon>
        <taxon>Euarchontoglires</taxon>
        <taxon>Glires</taxon>
        <taxon>Rodentia</taxon>
        <taxon>Myomorpha</taxon>
        <taxon>Muroidea</taxon>
        <taxon>Cricetidae</taxon>
        <taxon>Cricetinae</taxon>
        <taxon>Cricetulus</taxon>
    </lineage>
</organism>
<reference key="1">
    <citation type="journal article" date="1994" name="J. Biol. Chem.">
        <title>Isolation of a hamster cDNA clone coding for a function involved in methotrexate uptake.</title>
        <authorList>
            <person name="Williams F.M.R."/>
            <person name="Murray R.C."/>
            <person name="Underhill T.M."/>
            <person name="Flintoff W.F."/>
        </authorList>
    </citation>
    <scope>NUCLEOTIDE SEQUENCE [MRNA]</scope>
    <source>
        <tissue>Ovary</tissue>
    </source>
</reference>
<reference key="2">
    <citation type="journal article" date="2011" name="Nat. Biotechnol.">
        <title>The genomic sequence of the Chinese hamster ovary (CHO)-K1 cell line.</title>
        <authorList>
            <person name="Xu X."/>
            <person name="Nagarajan H."/>
            <person name="Lewis N.E."/>
            <person name="Pan S."/>
            <person name="Cai Z."/>
            <person name="Liu X."/>
            <person name="Chen W."/>
            <person name="Xie M."/>
            <person name="Wang W."/>
            <person name="Hammond S."/>
            <person name="Andersen M.R."/>
            <person name="Neff N."/>
            <person name="Passarelli B."/>
            <person name="Koh W."/>
            <person name="Fan H.C."/>
            <person name="Wang J."/>
            <person name="Gui Y."/>
            <person name="Lee K.H."/>
            <person name="Betenbaugh M.J."/>
            <person name="Quake S.R."/>
            <person name="Famili I."/>
            <person name="Palsson B.O."/>
            <person name="Wang J."/>
        </authorList>
    </citation>
    <scope>NUCLEOTIDE SEQUENCE [LARGE SCALE GENOMIC DNA]</scope>
</reference>
<accession>P42557</accession>
<accession>G3H8Y7</accession>
<keyword id="KW-0007">Acetylation</keyword>
<keyword id="KW-0050">Antiport</keyword>
<keyword id="KW-1003">Cell membrane</keyword>
<keyword id="KW-0290">Folate-binding</keyword>
<keyword id="KW-0325">Glycoprotein</keyword>
<keyword id="KW-0472">Membrane</keyword>
<keyword id="KW-0597">Phosphoprotein</keyword>
<keyword id="KW-1185">Reference proteome</keyword>
<keyword id="KW-0812">Transmembrane</keyword>
<keyword id="KW-1133">Transmembrane helix</keyword>
<keyword id="KW-0813">Transport</keyword>
<feature type="chain" id="PRO_0000178659" description="Reduced folate transporter">
    <location>
        <begin position="1"/>
        <end position="518"/>
    </location>
</feature>
<feature type="topological domain" description="Cytoplasmic" evidence="2">
    <location>
        <begin position="1"/>
        <end position="29"/>
    </location>
</feature>
<feature type="transmembrane region" description="Helical; Name=1" evidence="2">
    <location>
        <begin position="30"/>
        <end position="50"/>
    </location>
</feature>
<feature type="topological domain" description="Extracellular" evidence="2">
    <location>
        <begin position="51"/>
        <end position="62"/>
    </location>
</feature>
<feature type="transmembrane region" description="Helical; Name=2" evidence="2">
    <location>
        <begin position="63"/>
        <end position="85"/>
    </location>
</feature>
<feature type="topological domain" description="Cytoplasmic" evidence="2">
    <location>
        <begin position="86"/>
        <end position="89"/>
    </location>
</feature>
<feature type="transmembrane region" description="Helical; Name=3" evidence="2">
    <location>
        <begin position="90"/>
        <end position="110"/>
    </location>
</feature>
<feature type="topological domain" description="Extracellular" evidence="2">
    <location>
        <begin position="111"/>
        <end position="114"/>
    </location>
</feature>
<feature type="transmembrane region" description="Helical; Name=4" evidence="2">
    <location>
        <begin position="115"/>
        <end position="137"/>
    </location>
</feature>
<feature type="topological domain" description="Cytoplasmic" evidence="2">
    <location>
        <begin position="138"/>
        <end position="151"/>
    </location>
</feature>
<feature type="transmembrane region" description="Helical; Name=5" evidence="2">
    <location>
        <begin position="152"/>
        <end position="176"/>
    </location>
</feature>
<feature type="topological domain" description="Extracellular" evidence="2">
    <location>
        <begin position="177"/>
        <end position="181"/>
    </location>
</feature>
<feature type="transmembrane region" description="Helical; Name=6" evidence="2">
    <location>
        <begin position="182"/>
        <end position="200"/>
    </location>
</feature>
<feature type="topological domain" description="Cytoplasmic" evidence="2">
    <location>
        <begin position="201"/>
        <end position="266"/>
    </location>
</feature>
<feature type="transmembrane region" description="Helical; Name=7" evidence="2">
    <location>
        <begin position="267"/>
        <end position="292"/>
    </location>
</feature>
<feature type="topological domain" description="Extracellular" evidence="2">
    <location>
        <begin position="293"/>
        <end position="300"/>
    </location>
</feature>
<feature type="transmembrane region" description="Helical; Name=8" evidence="2">
    <location>
        <begin position="301"/>
        <end position="323"/>
    </location>
</feature>
<feature type="topological domain" description="Cytoplasmic" evidence="2">
    <location>
        <begin position="324"/>
        <end position="329"/>
    </location>
</feature>
<feature type="transmembrane region" description="Helical; Name=9" evidence="2">
    <location>
        <begin position="330"/>
        <end position="350"/>
    </location>
</feature>
<feature type="topological domain" description="Extracellular" evidence="2">
    <location>
        <begin position="351"/>
        <end position="353"/>
    </location>
</feature>
<feature type="transmembrane region" description="Helical; Name=10" evidence="2">
    <location>
        <begin position="354"/>
        <end position="377"/>
    </location>
</feature>
<feature type="topological domain" description="Cytoplasmic" evidence="2">
    <location>
        <begin position="378"/>
        <end position="391"/>
    </location>
</feature>
<feature type="transmembrane region" description="Helical; Name=11" evidence="2">
    <location>
        <begin position="392"/>
        <end position="415"/>
    </location>
</feature>
<feature type="topological domain" description="Extracellular" evidence="2">
    <location>
        <begin position="416"/>
        <end position="423"/>
    </location>
</feature>
<feature type="transmembrane region" description="Helical; Name=12" evidence="2">
    <location>
        <begin position="424"/>
        <end position="448"/>
    </location>
</feature>
<feature type="topological domain" description="Cytoplasmic" evidence="2">
    <location>
        <begin position="449"/>
        <end position="512"/>
    </location>
</feature>
<feature type="region of interest" description="Required for substrate-binding" evidence="2">
    <location>
        <begin position="407"/>
        <end position="419"/>
    </location>
</feature>
<feature type="region of interest" description="Disordered" evidence="4">
    <location>
        <begin position="480"/>
        <end position="518"/>
    </location>
</feature>
<feature type="binding site" evidence="2">
    <location>
        <position position="48"/>
    </location>
    <ligand>
        <name>folate</name>
        <dbReference type="ChEBI" id="CHEBI:62501"/>
    </ligand>
</feature>
<feature type="binding site" evidence="2">
    <location>
        <position position="49"/>
    </location>
    <ligand>
        <name>folate</name>
        <dbReference type="ChEBI" id="CHEBI:62501"/>
    </ligand>
</feature>
<feature type="binding site" evidence="2">
    <location>
        <position position="121"/>
    </location>
    <ligand>
        <name>folate</name>
        <dbReference type="ChEBI" id="CHEBI:62501"/>
    </ligand>
</feature>
<feature type="binding site" evidence="2">
    <location>
        <position position="131"/>
    </location>
    <ligand>
        <name>folate</name>
        <dbReference type="ChEBI" id="CHEBI:62501"/>
    </ligand>
</feature>
<feature type="binding site" evidence="2">
    <location>
        <position position="162"/>
    </location>
    <ligand>
        <name>folate</name>
        <dbReference type="ChEBI" id="CHEBI:62501"/>
    </ligand>
</feature>
<feature type="binding site" evidence="2">
    <location>
        <position position="281"/>
    </location>
    <ligand>
        <name>folate</name>
        <dbReference type="ChEBI" id="CHEBI:62501"/>
    </ligand>
</feature>
<feature type="binding site" evidence="2">
    <location>
        <position position="282"/>
    </location>
    <ligand>
        <name>folate</name>
        <dbReference type="ChEBI" id="CHEBI:62501"/>
    </ligand>
</feature>
<feature type="binding site" evidence="2">
    <location>
        <position position="286"/>
    </location>
    <ligand>
        <name>folate</name>
        <dbReference type="ChEBI" id="CHEBI:62501"/>
    </ligand>
</feature>
<feature type="binding site" evidence="2">
    <location>
        <position position="366"/>
    </location>
    <ligand>
        <name>folate</name>
        <dbReference type="ChEBI" id="CHEBI:62501"/>
    </ligand>
</feature>
<feature type="binding site" evidence="2">
    <location>
        <position position="370"/>
    </location>
    <ligand>
        <name>folate</name>
        <dbReference type="ChEBI" id="CHEBI:62501"/>
    </ligand>
</feature>
<feature type="modified residue" description="N-acetylmethionine" evidence="2">
    <location>
        <position position="1"/>
    </location>
</feature>
<feature type="modified residue" description="Phosphoserine" evidence="1">
    <location>
        <position position="473"/>
    </location>
</feature>
<feature type="modified residue" description="Phosphoserine" evidence="1">
    <location>
        <position position="478"/>
    </location>
</feature>
<feature type="modified residue" description="Phosphoserine" evidence="1">
    <location>
        <position position="483"/>
    </location>
</feature>
<feature type="glycosylation site" description="N-linked (GlcNAc...) asparagine" evidence="3">
    <location>
        <position position="56"/>
    </location>
</feature>
<feature type="sequence conflict" description="In Ref. 1; AAC52138." ref="1">
    <original>QL</original>
    <variation>HV</variation>
    <location>
        <begin position="268"/>
        <end position="269"/>
    </location>
</feature>
<feature type="sequence conflict" description="In Ref. 1; AAC52138." ref="1">
    <original>G</original>
    <variation>R</variation>
    <location>
        <position position="487"/>
    </location>
</feature>
<evidence type="ECO:0000250" key="1">
    <source>
        <dbReference type="UniProtKB" id="P41438"/>
    </source>
</evidence>
<evidence type="ECO:0000250" key="2">
    <source>
        <dbReference type="UniProtKB" id="P41440"/>
    </source>
</evidence>
<evidence type="ECO:0000255" key="3"/>
<evidence type="ECO:0000256" key="4">
    <source>
        <dbReference type="SAM" id="MobiDB-lite"/>
    </source>
</evidence>
<evidence type="ECO:0000303" key="5">
    <source>
    </source>
</evidence>
<evidence type="ECO:0000305" key="6"/>
<sequence>MVPTGQVAEKQACEEPRQDRELKSWRCLVFYLCFFGFMAQLRPGESFITPYLLQQNFTIEQVTNEIIPVLPYSHLAVLVPIFLLTDYLRYKPILILQCLSFMCVWLLLLLGTSVVHMQLMEVFYSVTMAARIAYSSYIFSLVRPSRYQRMASYSRAAVLLGVFTSSVLGQVLWPLEQKSQNSNMLNYISLGFIIFSLGLSLFLKRPKHSLFFNRSALVHKALPCELDQMHPGPGRPEPGKLERVLGSCRNSFLVCMLSELVGNLRQPQLRLWCLWWVFNSAGYYLIVYYVHVLWSIDKNLNYNGAVDAASTLLSAITSFSAGFVKIRWALWSKLVIASVIAIQAGLVFCMYMVHYVTWVHKIWVLYMTYVLFRGAYQFLVPIATFQIASSLSKELCALVFGINTFLATALKTAITLVVSDKRGLGLKVEKQFCIYSVYFMVLSVICFVGAVLDGVRYCRRGRHQPLPLPQELSPLENSVQVPSMQDGGLGGLQPSAPQLLPEDGVEDSEASLRAEAKA</sequence>